<comment type="function">
    <text>Associates with the EF-Tu.GDP complex and induces the exchange of GDP to GTP. It remains bound to the aminoacyl-tRNA.EF-Tu.GTP complex up to the GTP hydrolysis stage on the ribosome.</text>
</comment>
<comment type="subunit">
    <text>Heterotetramer composed of two EF-Ts.EF-Tu dimer complexes.</text>
</comment>
<comment type="subcellular location">
    <subcellularLocation>
        <location>Cytoplasm</location>
    </subcellularLocation>
</comment>
<comment type="similarity">
    <text evidence="2">Belongs to the EF-Ts family.</text>
</comment>
<evidence type="ECO:0000250" key="1"/>
<evidence type="ECO:0000305" key="2"/>
<evidence type="ECO:0007829" key="3">
    <source>
        <dbReference type="PDB" id="1AIP"/>
    </source>
</evidence>
<evidence type="ECO:0007829" key="4">
    <source>
        <dbReference type="PDB" id="1TFE"/>
    </source>
</evidence>
<sequence>MSQMELIKKLREATGAGMMDVKRALEDAGWDEEKAVQLLRERGAMKAAKKADREAREGIIGHYIHHNQRVGVLVELNCETDFVARNELFQNLAKDLAMHIAMMNPRYVSAEEIPAEELEKERQIYIQAALNEGKPQQIAEKIAEGRLKKYLEEVVLLEQPFVKDDKVKVKELIQQAIAKIGENIVVRRFCRFELGA</sequence>
<accession>P43895</accession>
<accession>Q5SJZ2</accession>
<reference key="1">
    <citation type="journal article" date="1996" name="Eur. J. Biochem.">
        <title>Elongation factor Ts from Thermus thermophilus -- overproduction in Escherichia coli, quaternary structure and interaction with elongation factor Tu.</title>
        <authorList>
            <person name="Blank J."/>
            <person name="Nock S."/>
            <person name="Kreutzer R."/>
            <person name="Sprinzl M."/>
        </authorList>
    </citation>
    <scope>NUCLEOTIDE SEQUENCE [GENOMIC DNA]</scope>
</reference>
<reference key="2">
    <citation type="submission" date="2004-11" db="EMBL/GenBank/DDBJ databases">
        <title>Complete genome sequence of Thermus thermophilus HB8.</title>
        <authorList>
            <person name="Masui R."/>
            <person name="Kurokawa K."/>
            <person name="Nakagawa N."/>
            <person name="Tokunaga F."/>
            <person name="Koyama Y."/>
            <person name="Shibata T."/>
            <person name="Oshima T."/>
            <person name="Yokoyama S."/>
            <person name="Yasunaga T."/>
            <person name="Kuramitsu S."/>
        </authorList>
    </citation>
    <scope>NUCLEOTIDE SEQUENCE [LARGE SCALE GENOMIC DNA]</scope>
    <source>
        <strain>ATCC 27634 / DSM 579 / HB8</strain>
    </source>
</reference>
<reference key="3">
    <citation type="journal article" date="1997" name="Nat. Struct. Biol.">
        <title>Crystal structure of the EF-Tu.EF-Ts complex from Thermus thermophilus.</title>
        <authorList>
            <person name="Wang Y."/>
            <person name="Jiang Y."/>
            <person name="Meyering-Voss M."/>
            <person name="Sprinzl M."/>
            <person name="Sigler P.B."/>
        </authorList>
    </citation>
    <scope>X-RAY CRYSTALLOGRAPHY (3.0 ANGSTROMS) OF COMPLEX WITH EF-TU</scope>
</reference>
<feature type="chain" id="PRO_0000161222" description="Elongation factor Ts">
    <location>
        <begin position="1"/>
        <end position="196"/>
    </location>
</feature>
<feature type="region of interest" description="Involved in Mg(2+) ion dislocation from EF-Tu" evidence="1">
    <location>
        <begin position="80"/>
        <end position="83"/>
    </location>
</feature>
<feature type="helix" evidence="3">
    <location>
        <begin position="3"/>
        <end position="14"/>
    </location>
</feature>
<feature type="helix" evidence="3">
    <location>
        <begin position="18"/>
        <end position="27"/>
    </location>
</feature>
<feature type="turn" evidence="3">
    <location>
        <begin position="28"/>
        <end position="30"/>
    </location>
</feature>
<feature type="helix" evidence="3">
    <location>
        <begin position="32"/>
        <end position="50"/>
    </location>
</feature>
<feature type="strand" evidence="4">
    <location>
        <begin position="57"/>
        <end position="64"/>
    </location>
</feature>
<feature type="strand" evidence="4">
    <location>
        <begin position="68"/>
        <end position="79"/>
    </location>
</feature>
<feature type="helix" evidence="4">
    <location>
        <begin position="81"/>
        <end position="85"/>
    </location>
</feature>
<feature type="helix" evidence="4">
    <location>
        <begin position="87"/>
        <end position="103"/>
    </location>
</feature>
<feature type="strand" evidence="4">
    <location>
        <begin position="106"/>
        <end position="109"/>
    </location>
</feature>
<feature type="helix" evidence="4">
    <location>
        <begin position="110"/>
        <end position="112"/>
    </location>
</feature>
<feature type="helix" evidence="4">
    <location>
        <begin position="115"/>
        <end position="130"/>
    </location>
</feature>
<feature type="turn" evidence="4">
    <location>
        <begin position="131"/>
        <end position="133"/>
    </location>
</feature>
<feature type="helix" evidence="4">
    <location>
        <begin position="136"/>
        <end position="154"/>
    </location>
</feature>
<feature type="helix" evidence="4">
    <location>
        <begin position="156"/>
        <end position="158"/>
    </location>
</feature>
<feature type="strand" evidence="4">
    <location>
        <begin position="159"/>
        <end position="161"/>
    </location>
</feature>
<feature type="strand" evidence="4">
    <location>
        <begin position="164"/>
        <end position="168"/>
    </location>
</feature>
<feature type="helix" evidence="4">
    <location>
        <begin position="169"/>
        <end position="180"/>
    </location>
</feature>
<feature type="strand" evidence="4">
    <location>
        <begin position="185"/>
        <end position="193"/>
    </location>
</feature>
<name>EFTS_THET8</name>
<dbReference type="EMBL" id="X83598">
    <property type="protein sequence ID" value="CAA58578.1"/>
    <property type="molecule type" value="Genomic_DNA"/>
</dbReference>
<dbReference type="EMBL" id="AP008226">
    <property type="protein sequence ID" value="BAD70683.1"/>
    <property type="molecule type" value="Genomic_DNA"/>
</dbReference>
<dbReference type="RefSeq" id="WP_011228249.1">
    <property type="nucleotide sequence ID" value="NC_006461.1"/>
</dbReference>
<dbReference type="RefSeq" id="YP_144126.1">
    <property type="nucleotide sequence ID" value="NC_006461.1"/>
</dbReference>
<dbReference type="PDB" id="1AIP">
    <property type="method" value="X-ray"/>
    <property type="resolution" value="3.00 A"/>
    <property type="chains" value="C/D/G/H=1-196"/>
</dbReference>
<dbReference type="PDB" id="1TFE">
    <property type="method" value="X-ray"/>
    <property type="resolution" value="1.70 A"/>
    <property type="chains" value="A=55-196"/>
</dbReference>
<dbReference type="PDBsum" id="1AIP"/>
<dbReference type="PDBsum" id="1TFE"/>
<dbReference type="SMR" id="P43895"/>
<dbReference type="DIP" id="DIP-6078N"/>
<dbReference type="IntAct" id="P43895">
    <property type="interactions" value="1"/>
</dbReference>
<dbReference type="EnsemblBacteria" id="BAD70683">
    <property type="protein sequence ID" value="BAD70683"/>
    <property type="gene ID" value="BAD70683"/>
</dbReference>
<dbReference type="GeneID" id="3170120"/>
<dbReference type="KEGG" id="ttj:TTHA0860"/>
<dbReference type="PATRIC" id="fig|300852.9.peg.854"/>
<dbReference type="eggNOG" id="COG0264">
    <property type="taxonomic scope" value="Bacteria"/>
</dbReference>
<dbReference type="HOGENOM" id="CLU_047155_1_1_0"/>
<dbReference type="PhylomeDB" id="P43895"/>
<dbReference type="EvolutionaryTrace" id="P43895"/>
<dbReference type="Proteomes" id="UP000000532">
    <property type="component" value="Chromosome"/>
</dbReference>
<dbReference type="GO" id="GO:0005737">
    <property type="term" value="C:cytoplasm"/>
    <property type="evidence" value="ECO:0007669"/>
    <property type="project" value="UniProtKB-SubCell"/>
</dbReference>
<dbReference type="GO" id="GO:0003746">
    <property type="term" value="F:translation elongation factor activity"/>
    <property type="evidence" value="ECO:0007669"/>
    <property type="project" value="UniProtKB-UniRule"/>
</dbReference>
<dbReference type="CDD" id="cd14275">
    <property type="entry name" value="UBA_EF-Ts"/>
    <property type="match status" value="1"/>
</dbReference>
<dbReference type="FunFam" id="1.10.286.20:FF:000001">
    <property type="entry name" value="Elongation factor Ts"/>
    <property type="match status" value="1"/>
</dbReference>
<dbReference type="FunFam" id="1.10.8.10:FF:000001">
    <property type="entry name" value="Elongation factor Ts"/>
    <property type="match status" value="1"/>
</dbReference>
<dbReference type="Gene3D" id="1.10.286.20">
    <property type="match status" value="1"/>
</dbReference>
<dbReference type="Gene3D" id="1.10.8.10">
    <property type="entry name" value="DNA helicase RuvA subunit, C-terminal domain"/>
    <property type="match status" value="1"/>
</dbReference>
<dbReference type="Gene3D" id="3.30.479.20">
    <property type="entry name" value="Elongation factor Ts, dimerisation domain"/>
    <property type="match status" value="1"/>
</dbReference>
<dbReference type="HAMAP" id="MF_00050">
    <property type="entry name" value="EF_Ts"/>
    <property type="match status" value="1"/>
</dbReference>
<dbReference type="InterPro" id="IPR036402">
    <property type="entry name" value="EF-Ts_dimer_sf"/>
</dbReference>
<dbReference type="InterPro" id="IPR001816">
    <property type="entry name" value="Transl_elong_EFTs/EF1B"/>
</dbReference>
<dbReference type="InterPro" id="IPR014039">
    <property type="entry name" value="Transl_elong_EFTs/EF1B_dimer"/>
</dbReference>
<dbReference type="InterPro" id="IPR018101">
    <property type="entry name" value="Transl_elong_Ts_CS"/>
</dbReference>
<dbReference type="InterPro" id="IPR009060">
    <property type="entry name" value="UBA-like_sf"/>
</dbReference>
<dbReference type="NCBIfam" id="TIGR00116">
    <property type="entry name" value="tsf"/>
    <property type="match status" value="1"/>
</dbReference>
<dbReference type="PANTHER" id="PTHR11741">
    <property type="entry name" value="ELONGATION FACTOR TS"/>
    <property type="match status" value="1"/>
</dbReference>
<dbReference type="PANTHER" id="PTHR11741:SF0">
    <property type="entry name" value="ELONGATION FACTOR TS, MITOCHONDRIAL"/>
    <property type="match status" value="1"/>
</dbReference>
<dbReference type="Pfam" id="PF00889">
    <property type="entry name" value="EF_TS"/>
    <property type="match status" value="1"/>
</dbReference>
<dbReference type="SUPFAM" id="SSF54713">
    <property type="entry name" value="Elongation factor Ts (EF-Ts), dimerisation domain"/>
    <property type="match status" value="1"/>
</dbReference>
<dbReference type="SUPFAM" id="SSF46934">
    <property type="entry name" value="UBA-like"/>
    <property type="match status" value="1"/>
</dbReference>
<dbReference type="PROSITE" id="PS01126">
    <property type="entry name" value="EF_TS_1"/>
    <property type="match status" value="1"/>
</dbReference>
<dbReference type="PROSITE" id="PS01127">
    <property type="entry name" value="EF_TS_2"/>
    <property type="match status" value="1"/>
</dbReference>
<organism>
    <name type="scientific">Thermus thermophilus (strain ATCC 27634 / DSM 579 / HB8)</name>
    <dbReference type="NCBI Taxonomy" id="300852"/>
    <lineage>
        <taxon>Bacteria</taxon>
        <taxon>Thermotogati</taxon>
        <taxon>Deinococcota</taxon>
        <taxon>Deinococci</taxon>
        <taxon>Thermales</taxon>
        <taxon>Thermaceae</taxon>
        <taxon>Thermus</taxon>
    </lineage>
</organism>
<proteinExistence type="evidence at protein level"/>
<gene>
    <name type="primary">tsf</name>
    <name type="ordered locus">TTHA0860</name>
</gene>
<keyword id="KW-0002">3D-structure</keyword>
<keyword id="KW-0963">Cytoplasm</keyword>
<keyword id="KW-0251">Elongation factor</keyword>
<keyword id="KW-0648">Protein biosynthesis</keyword>
<keyword id="KW-1185">Reference proteome</keyword>
<protein>
    <recommendedName>
        <fullName>Elongation factor Ts</fullName>
        <shortName>EF-Ts</shortName>
    </recommendedName>
</protein>